<sequence>MAYSTYGRHITMDLREVAFEKLNDVRFLKEVMYEAAAQCGATVVGESFVQFSPQGVTGVLVLSESHLSIHTYPEEGFAAIDCYTCGYTVDPAVACDYLKAALGGRVVGYRALRRGSGAIEDLTTLHLAAANN</sequence>
<comment type="function">
    <text evidence="1">Catalyzes the decarboxylation of S-adenosylmethionine to S-adenosylmethioninamine (dcAdoMet), the propylamine donor required for the synthesis of the polyamines spermine and spermidine from the diamine putrescine.</text>
</comment>
<comment type="catalytic activity">
    <reaction evidence="1">
        <text>S-adenosyl-L-methionine + H(+) = S-adenosyl 3-(methylsulfanyl)propylamine + CO2</text>
        <dbReference type="Rhea" id="RHEA:15981"/>
        <dbReference type="ChEBI" id="CHEBI:15378"/>
        <dbReference type="ChEBI" id="CHEBI:16526"/>
        <dbReference type="ChEBI" id="CHEBI:57443"/>
        <dbReference type="ChEBI" id="CHEBI:59789"/>
        <dbReference type="EC" id="4.1.1.50"/>
    </reaction>
</comment>
<comment type="cofactor">
    <cofactor evidence="1">
        <name>pyruvate</name>
        <dbReference type="ChEBI" id="CHEBI:15361"/>
    </cofactor>
    <text evidence="1">Binds 1 pyruvoyl group covalently per subunit.</text>
</comment>
<comment type="pathway">
    <text evidence="1">Amine and polyamine biosynthesis; S-adenosylmethioninamine biosynthesis; S-adenosylmethioninamine from S-adenosyl-L-methionine: step 1/1.</text>
</comment>
<comment type="subunit">
    <text evidence="1">Heterotetramer of two alpha and two beta chains arranged as a dimer of alpha/beta heterodimers.</text>
</comment>
<comment type="PTM">
    <text evidence="1">Is synthesized initially as an inactive proenzyme. Formation of the active enzyme involves a self-maturation process in which the active site pyruvoyl group is generated from an internal serine residue via an autocatalytic post-translational modification. Two non-identical subunits are generated from the proenzyme in this reaction, and the pyruvate is formed at the N-terminus of the alpha chain, which is derived from the carboxyl end of the proenzyme. The post-translation cleavage follows an unusual pathway, termed non-hydrolytic serinolysis, in which the side chain hydroxyl group of the serine supplies its oxygen atom to form the C-terminus of the beta chain, while the remainder of the serine residue undergoes an oxidative deamination to produce ammonia and the pyruvoyl group blocking the N-terminus of the alpha chain.</text>
</comment>
<comment type="similarity">
    <text evidence="1">Belongs to the prokaryotic AdoMetDC family. Type 1 subfamily.</text>
</comment>
<keyword id="KW-0068">Autocatalytic cleavage</keyword>
<keyword id="KW-0210">Decarboxylase</keyword>
<keyword id="KW-0456">Lyase</keyword>
<keyword id="KW-0620">Polyamine biosynthesis</keyword>
<keyword id="KW-0670">Pyruvate</keyword>
<keyword id="KW-1185">Reference proteome</keyword>
<keyword id="KW-0949">S-adenosyl-L-methionine</keyword>
<keyword id="KW-0704">Schiff base</keyword>
<keyword id="KW-0745">Spermidine biosynthesis</keyword>
<keyword id="KW-0865">Zymogen</keyword>
<dbReference type="EC" id="4.1.1.50" evidence="1"/>
<dbReference type="EMBL" id="AP006840">
    <property type="protein sequence ID" value="BAD39406.1"/>
    <property type="molecule type" value="Genomic_DNA"/>
</dbReference>
<dbReference type="RefSeq" id="WP_011194555.1">
    <property type="nucleotide sequence ID" value="NC_006177.1"/>
</dbReference>
<dbReference type="SMR" id="Q67SD7"/>
<dbReference type="STRING" id="292459.STH421"/>
<dbReference type="KEGG" id="sth:STH421"/>
<dbReference type="eggNOG" id="COG1586">
    <property type="taxonomic scope" value="Bacteria"/>
</dbReference>
<dbReference type="HOGENOM" id="CLU_125470_2_3_9"/>
<dbReference type="OrthoDB" id="9793120at2"/>
<dbReference type="UniPathway" id="UPA00331">
    <property type="reaction ID" value="UER00451"/>
</dbReference>
<dbReference type="Proteomes" id="UP000000417">
    <property type="component" value="Chromosome"/>
</dbReference>
<dbReference type="GO" id="GO:0005829">
    <property type="term" value="C:cytosol"/>
    <property type="evidence" value="ECO:0007669"/>
    <property type="project" value="TreeGrafter"/>
</dbReference>
<dbReference type="GO" id="GO:0004014">
    <property type="term" value="F:adenosylmethionine decarboxylase activity"/>
    <property type="evidence" value="ECO:0007669"/>
    <property type="project" value="UniProtKB-UniRule"/>
</dbReference>
<dbReference type="GO" id="GO:0008295">
    <property type="term" value="P:spermidine biosynthetic process"/>
    <property type="evidence" value="ECO:0007669"/>
    <property type="project" value="UniProtKB-UniRule"/>
</dbReference>
<dbReference type="Gene3D" id="3.30.160.750">
    <property type="match status" value="1"/>
</dbReference>
<dbReference type="Gene3D" id="3.30.360.110">
    <property type="entry name" value="S-adenosylmethionine decarboxylase domain"/>
    <property type="match status" value="1"/>
</dbReference>
<dbReference type="HAMAP" id="MF_00464">
    <property type="entry name" value="AdoMetDC_1"/>
    <property type="match status" value="1"/>
</dbReference>
<dbReference type="InterPro" id="IPR042286">
    <property type="entry name" value="AdoMetDC_C"/>
</dbReference>
<dbReference type="InterPro" id="IPR003826">
    <property type="entry name" value="AdoMetDC_fam_prok"/>
</dbReference>
<dbReference type="InterPro" id="IPR042284">
    <property type="entry name" value="AdoMetDC_N"/>
</dbReference>
<dbReference type="InterPro" id="IPR016067">
    <property type="entry name" value="S-AdoMet_deCO2ase_core"/>
</dbReference>
<dbReference type="InterPro" id="IPR017716">
    <property type="entry name" value="S-AdoMet_deCOase_pro-enz"/>
</dbReference>
<dbReference type="NCBIfam" id="TIGR03330">
    <property type="entry name" value="SAM_DCase_Bsu"/>
    <property type="match status" value="1"/>
</dbReference>
<dbReference type="PANTHER" id="PTHR33866">
    <property type="entry name" value="S-ADENOSYLMETHIONINE DECARBOXYLASE PROENZYME"/>
    <property type="match status" value="1"/>
</dbReference>
<dbReference type="PANTHER" id="PTHR33866:SF2">
    <property type="entry name" value="S-ADENOSYLMETHIONINE DECARBOXYLASE PROENZYME"/>
    <property type="match status" value="1"/>
</dbReference>
<dbReference type="Pfam" id="PF02675">
    <property type="entry name" value="AdoMet_dc"/>
    <property type="match status" value="1"/>
</dbReference>
<dbReference type="SUPFAM" id="SSF56276">
    <property type="entry name" value="S-adenosylmethionine decarboxylase"/>
    <property type="match status" value="1"/>
</dbReference>
<organism>
    <name type="scientific">Symbiobacterium thermophilum (strain DSM 24528 / JCM 14929 / IAM 14863 / T)</name>
    <dbReference type="NCBI Taxonomy" id="292459"/>
    <lineage>
        <taxon>Bacteria</taxon>
        <taxon>Bacillati</taxon>
        <taxon>Bacillota</taxon>
        <taxon>Clostridia</taxon>
        <taxon>Eubacteriales</taxon>
        <taxon>Symbiobacteriaceae</taxon>
        <taxon>Symbiobacterium</taxon>
    </lineage>
</organism>
<reference key="1">
    <citation type="journal article" date="2004" name="Nucleic Acids Res.">
        <title>Genome sequence of Symbiobacterium thermophilum, an uncultivable bacterium that depends on microbial commensalism.</title>
        <authorList>
            <person name="Ueda K."/>
            <person name="Yamashita A."/>
            <person name="Ishikawa J."/>
            <person name="Shimada M."/>
            <person name="Watsuji T."/>
            <person name="Morimura K."/>
            <person name="Ikeda H."/>
            <person name="Hattori M."/>
            <person name="Beppu T."/>
        </authorList>
    </citation>
    <scope>NUCLEOTIDE SEQUENCE [LARGE SCALE GENOMIC DNA]</scope>
    <source>
        <strain>DSM 24528 / JCM 14929 / IAM 14863 / T</strain>
    </source>
</reference>
<proteinExistence type="inferred from homology"/>
<name>SPEH_SYMTH</name>
<evidence type="ECO:0000255" key="1">
    <source>
        <dbReference type="HAMAP-Rule" id="MF_00464"/>
    </source>
</evidence>
<protein>
    <recommendedName>
        <fullName evidence="1">S-adenosylmethionine decarboxylase proenzyme</fullName>
        <shortName evidence="1">AdoMetDC</shortName>
        <shortName evidence="1">SAMDC</shortName>
        <ecNumber evidence="1">4.1.1.50</ecNumber>
    </recommendedName>
    <component>
        <recommendedName>
            <fullName evidence="1">S-adenosylmethionine decarboxylase beta chain</fullName>
        </recommendedName>
    </component>
    <component>
        <recommendedName>
            <fullName evidence="1">S-adenosylmethionine decarboxylase alpha chain</fullName>
        </recommendedName>
    </component>
</protein>
<accession>Q67SD7</accession>
<feature type="chain" id="PRO_1000013683" description="S-adenosylmethionine decarboxylase beta chain" evidence="1">
    <location>
        <begin position="1"/>
        <end position="64"/>
    </location>
</feature>
<feature type="chain" id="PRO_0000315032" description="S-adenosylmethionine decarboxylase alpha chain" evidence="1">
    <location>
        <begin position="65"/>
        <end position="132"/>
    </location>
</feature>
<feature type="active site" description="Schiff-base intermediate with substrate; via pyruvic acid" evidence="1">
    <location>
        <position position="65"/>
    </location>
</feature>
<feature type="active site" description="Proton acceptor; for processing activity" evidence="1">
    <location>
        <position position="70"/>
    </location>
</feature>
<feature type="active site" description="Proton donor; for catalytic activity" evidence="1">
    <location>
        <position position="85"/>
    </location>
</feature>
<feature type="site" description="Cleavage (non-hydrolytic); by autolysis" evidence="1">
    <location>
        <begin position="64"/>
        <end position="65"/>
    </location>
</feature>
<feature type="modified residue" description="Pyruvic acid (Ser); by autocatalysis" evidence="1">
    <location>
        <position position="65"/>
    </location>
</feature>
<gene>
    <name evidence="1" type="primary">speH</name>
    <name type="ordered locus">STH421</name>
</gene>